<organism>
    <name type="scientific">Rattus norvegicus</name>
    <name type="common">Rat</name>
    <dbReference type="NCBI Taxonomy" id="10116"/>
    <lineage>
        <taxon>Eukaryota</taxon>
        <taxon>Metazoa</taxon>
        <taxon>Chordata</taxon>
        <taxon>Craniata</taxon>
        <taxon>Vertebrata</taxon>
        <taxon>Euteleostomi</taxon>
        <taxon>Mammalia</taxon>
        <taxon>Eutheria</taxon>
        <taxon>Euarchontoglires</taxon>
        <taxon>Glires</taxon>
        <taxon>Rodentia</taxon>
        <taxon>Myomorpha</taxon>
        <taxon>Muroidea</taxon>
        <taxon>Muridae</taxon>
        <taxon>Murinae</taxon>
        <taxon>Rattus</taxon>
    </lineage>
</organism>
<comment type="function">
    <molecule>Small integral membrane protein 20</molecule>
    <text evidence="2">Component of the MITRAC (mitochondrial translation regulation assembly intermediate of cytochrome c oxidase complex) complex, that regulates cytochrome c oxidase assembly (By similarity). Promotes the progression of complex assembly after the association of Mt-Co1/Cox11 with Cox4I1 and Cox6c (By similarity). Chaperone-like assembly factor required to stabilize newly synthesized Mt-Co1/Cox1 and to prevent its premature turnover (By similarity).</text>
</comment>
<comment type="function">
    <molecule>Phoenixin-14</molecule>
    <text evidence="1 2 4 6 7 8 9 10 11 12 13">Peptide involved in a broad spectrum of regulatory functions (PubMed:27440717, PubMed:28844870, PubMed:28965207, PubMed:29364701, PubMed:30609107). Is a ligand for GPR173 (PubMed:27440717). As part of the reproductive cycle, it regulates gonadotropin-releasing hormone (GnRH) signaling in the hypothalamus and pituitary gland which augments the release of luteinizing hormone (PubMed:22963497, PubMed:27440717). More specifically, it regulates the expression of transcription factors CEBPB and POU2F1/OCT1 through the cAMP-PKA signaling pathway, which subsequently regulate the expression of GNRHR and KISS1 (By similarity). Plays a protective role in memory retention through activation of GNRHR (By similarity). Regulates the secretion of AVP by hypothalamic neurons (PubMed:29364701). Plays a role in the transduction of the itch sensation (By similarity). Induces anxiolytic effects, reducing behavior associated with anxiety (By similarity). Regulates food intake as well as satiation and satiety by increasing NUCB2 expression in neurons (PubMed:28844870, PubMed:30930149). In the ovary, it regulates follicular growth by stimulating granulosa cell proliferation by increasing the expression of GPR173, CREB1, CYP19A1, KITLG, FSHR, and LHCGR (By similarity). It also increases the production of estradiol (E2) (By similarity). In the heart, it regulates contractility and relaxation by activating the AKT1-NOS3 and MAPK1-MAPK3 signaling pathways (PubMed:28965207). It also plays a cardioprotective role during ischemia, where it activates the SAFE and RISK pathways (PubMed:28965207). Stimulates the proliferation and differentiation of preadipocytes (PubMed:30251651). In pancreatic islet cells, it induces proliferation of islet cells as well as the production of INS1 and INS2 through activation of the MAPK1-MAPK3 signaling pathways (PubMed:31422055).</text>
</comment>
<comment type="function">
    <molecule>Phoenixin-20</molecule>
    <text evidence="1 2 4 6 7 8 9 10 11 12 13">Peptide involved in a broad spectrum of regulatory functions (PubMed:27440717, PubMed:28844870, PubMed:28965207, PubMed:29364701, PubMed:30609107). Is a ligand for GPR173 (PubMed:27440717). As part of the reproductive cycle, it regulates gonadotropin-releasing hormone (GnRH) signaling in the hypothalamus and pituitary gland which augments the release of luteinizing hormone (PubMed:22963497, PubMed:27440717). More specifically, it regulates the expression of transcription factors CEBPB and POU2F1/OCT1 through the cAMP-PKA signaling pathway, which subsequently regulate the expression of GNRHR and KISS1 (By similarity). Plays a protective role in memory retention through activation of GNRHR (By similarity). Regulates the secretion of AVP by hypothalamic neurons (PubMed:29364701). Plays a role in the transduction of the itch sensation (By similarity). Induces anxiolytic effects, reducing behavior associated with anxiety (By similarity). Regulates food intake as well as satiation and satiety by increasing NUCB2 expression in neurons (PubMed:28844870, PubMed:30930149). In the ovary, it regulates follicular growth by stimulating granulosa cell proliferation by increasing the expression of GPR173, CREB1, CYP19A1, KITLG, FSHR, and LHCGR (By similarity). It also increases the production of estradiol (E2) (By similarity). In the heart, it regulates contractility and relaxation by activating the AKT1-NOS3 and MAPK1-MAPK3 signaling pathways (PubMed:28965207). It also plays a cardioprotective role during ischemia, where it activates the SAFE and RISK pathways (PubMed:28965207). Stimulates the proliferation and differentiation of preadipocytes (PubMed:30251651). In pancreatic islet cells, it induces proliferation of islet cells as well as the production of INS1 and INS2 through activation of the MAPK1-MAPK3 signaling pathways (PubMed:31422055).</text>
</comment>
<comment type="subunit">
    <text evidence="2">Component of the MITRAC (mitochondrial translation regulation assembly intermediate of cytochrome c oxidase complex) complex, the core components of this complex being Coa3/Mitrac12 and Cox14 (By similarity). Interacts with Coa3/Mitrac12 and Cox4i1 (By similarity). Directly interacts with newly synthesized Mt-Co1/Cox1 (By similarity).</text>
</comment>
<comment type="subcellular location">
    <molecule>Small integral membrane protein 20</molecule>
    <subcellularLocation>
        <location evidence="2">Mitochondrion inner membrane</location>
        <topology evidence="15">Single-pass membrane protein</topology>
    </subcellularLocation>
</comment>
<comment type="subcellular location">
    <molecule>Phoenixin-14</molecule>
    <subcellularLocation>
        <location evidence="4 10 11 13">Secreted</location>
    </subcellularLocation>
</comment>
<comment type="subcellular location">
    <molecule>Phoenixin-20</molecule>
    <subcellularLocation>
        <location evidence="4 10 11 13">Secreted</location>
    </subcellularLocation>
</comment>
<comment type="tissue specificity">
    <text evidence="4 5 8 10 13">Highly expressed in the hypothalamus, substantia nigra reticulata, Edinger-Westphal nucleus, and nucleus of the solitary tract/dorsal motor nucleus of the vagus, the spinal cord, and sensory ganglia (at protein level) (PubMed:22963497, PubMed:23912037). Also expressed in the heart, thymus, esophagus, stomach, spleen, lung, pituitary gland, kidney, jejunum, duodenum, ileum, cerebrum, pons, and colon (at protein level) (PubMed:22963497, PubMed:23912037, PubMed:28965207). Expressed in preadipocytes and apidocytes (at protein level) (PubMed:30251651). Expressed in pancreatic islet cells (at protein level) (PubMed:31422055).</text>
</comment>
<protein>
    <recommendedName>
        <fullName>Small integral membrane protein 20</fullName>
    </recommendedName>
    <alternativeName>
        <fullName evidence="2">Mitochondrial translation regulation assembly intermediate of cytochrome c oxidase protein of 7 kDa</fullName>
        <shortName evidence="2">MITRAC7</shortName>
    </alternativeName>
    <component>
        <recommendedName>
            <fullName evidence="14">Phoenixin-14</fullName>
            <shortName evidence="14">PNX-14</shortName>
        </recommendedName>
    </component>
    <component>
        <recommendedName>
            <fullName evidence="14">Phoenixin-20</fullName>
            <shortName evidence="14">PNX-20</shortName>
        </recommendedName>
    </component>
</protein>
<accession>C0HLM6</accession>
<evidence type="ECO:0000250" key="1">
    <source>
        <dbReference type="UniProtKB" id="D3Z7Q2"/>
    </source>
</evidence>
<evidence type="ECO:0000250" key="2">
    <source>
        <dbReference type="UniProtKB" id="Q8N5G0"/>
    </source>
</evidence>
<evidence type="ECO:0000255" key="3"/>
<evidence type="ECO:0000269" key="4">
    <source>
    </source>
</evidence>
<evidence type="ECO:0000269" key="5">
    <source>
    </source>
</evidence>
<evidence type="ECO:0000269" key="6">
    <source>
    </source>
</evidence>
<evidence type="ECO:0000269" key="7">
    <source>
    </source>
</evidence>
<evidence type="ECO:0000269" key="8">
    <source>
    </source>
</evidence>
<evidence type="ECO:0000269" key="9">
    <source>
    </source>
</evidence>
<evidence type="ECO:0000269" key="10">
    <source>
    </source>
</evidence>
<evidence type="ECO:0000269" key="11">
    <source>
    </source>
</evidence>
<evidence type="ECO:0000269" key="12">
    <source>
    </source>
</evidence>
<evidence type="ECO:0000269" key="13">
    <source>
    </source>
</evidence>
<evidence type="ECO:0000303" key="14">
    <source>
    </source>
</evidence>
<evidence type="ECO:0000305" key="15"/>
<evidence type="ECO:0000312" key="16">
    <source>
        <dbReference type="RGD" id="1565192"/>
    </source>
</evidence>
<reference evidence="15" key="1">
    <citation type="journal article" date="2013" name="J. Neuroendocrinol.">
        <title>A novel reproductive peptide, phoenixin.</title>
        <authorList>
            <person name="Yosten G.L."/>
            <person name="Lyu R.M."/>
            <person name="Hsueh A.J."/>
            <person name="Avsian-Kretchmer O."/>
            <person name="Chang J.K."/>
            <person name="Tullock C.W."/>
            <person name="Dun S.L."/>
            <person name="Dun N."/>
            <person name="Samson W.K."/>
        </authorList>
    </citation>
    <scope>NUCLEOTIDE SEQUENCE [MRNA]</scope>
    <scope>IDENTIFICATION BY MASS SPECTROMETRY</scope>
    <scope>PROTEIN SEQUENCE OF 47-66</scope>
    <scope>FUNCTION</scope>
    <scope>SUBCELLULAR LOCATION</scope>
    <scope>TISSUE SPECIFICITY</scope>
    <scope>AMIDATION AT PHE-66</scope>
</reference>
<reference evidence="15" key="2">
    <citation type="journal article" date="2013" name="Neuroscience">
        <title>Phoenixin: a novel peptide in rodent sensory ganglia.</title>
        <authorList>
            <person name="Lyu R.M."/>
            <person name="Huang X.F."/>
            <person name="Zhang Y."/>
            <person name="Dun S.L."/>
            <person name="Luo J.J."/>
            <person name="Chang J.K."/>
            <person name="Dun N.J."/>
        </authorList>
    </citation>
    <scope>TISSUE SPECIFICITY</scope>
</reference>
<reference evidence="15" key="3">
    <citation type="journal article" date="2016" name="Am. J. Physiol.">
        <title>Hypothalamic action of phoenixin to control reproductive hormone secretion in females: importance of the orphan G protein-coupled receptor Gpr173.</title>
        <authorList>
            <person name="Stein L.M."/>
            <person name="Tullock C.W."/>
            <person name="Mathews S.K."/>
            <person name="Garcia-Galiano D."/>
            <person name="Elias C.F."/>
            <person name="Samson W.K."/>
            <person name="Yosten G.L."/>
        </authorList>
    </citation>
    <scope>FUNCTION</scope>
</reference>
<reference evidence="15" key="4">
    <citation type="journal article" date="2017" name="Peptides">
        <title>Phoenixin-14 injected intracerebroventricularly but not intraperitoneally stimulates food intake in rats.</title>
        <authorList>
            <person name="Schalla M."/>
            <person name="Prinz P."/>
            <person name="Friedrich T."/>
            <person name="Scharner S."/>
            <person name="Kobelt P."/>
            <person name="Goebel-Stengel M."/>
            <person name="Rose M."/>
            <person name="Stengel A."/>
        </authorList>
    </citation>
    <scope>FUNCTION</scope>
</reference>
<reference evidence="15" key="5">
    <citation type="journal article" date="2018" name="Am. J. Physiol.">
        <title>Novel regulator of vasopressin secretion: phoenixin.</title>
        <authorList>
            <person name="Gasparini S."/>
            <person name="Stein L.M."/>
            <person name="Loewen S.P."/>
            <person name="Haddock C.J."/>
            <person name="Soo J."/>
            <person name="Ferguson A.V."/>
            <person name="Kolar G.R."/>
            <person name="Yosten G.L.C."/>
            <person name="Samson W.K."/>
        </authorList>
    </citation>
    <scope>FUNCTION</scope>
</reference>
<reference evidence="15" key="6">
    <citation type="journal article" date="2018" name="Biochim. Biophys. Acta">
        <title>Phoenixin-14 stimulates differentiation of 3T3-L1 preadipocytes via cAMP/Epac-dependent mechanism.</title>
        <authorList>
            <person name="Billert M."/>
            <person name="Wojciechowicz T."/>
            <person name="Jasaszwili M."/>
            <person name="Szczepankiewicz D."/>
            <person name="Wasko J."/>
            <person name="Kazmierczak S."/>
            <person name="Strowski M.Z."/>
            <person name="Nowak K.W."/>
            <person name="Skrzypski M."/>
        </authorList>
    </citation>
    <scope>FUNCTION</scope>
    <scope>SUBCELLULAR LOCATION</scope>
    <scope>TISSUE SPECIFICITY</scope>
</reference>
<reference evidence="15" key="7">
    <citation type="journal article" date="2018" name="Cell. Mol. Life Sci.">
        <title>Phoenixin-14: detection and novel physiological implications in cardiac modulation and cardioprotection.</title>
        <authorList>
            <person name="Rocca C."/>
            <person name="Scavello F."/>
            <person name="Granieri M.C."/>
            <person name="Pasqua T."/>
            <person name="Amodio N."/>
            <person name="Imbrogno S."/>
            <person name="Gattuso A."/>
            <person name="Mazza R."/>
            <person name="Cerra M.C."/>
            <person name="Angelone T."/>
        </authorList>
    </citation>
    <scope>FUNCTION</scope>
    <scope>TISSUE SPECIFICITY</scope>
</reference>
<reference evidence="15" key="8">
    <citation type="journal article" date="2019" name="Biochim. Biophys. Acta">
        <title>Phoenixin-14 stimulates proliferation and insulin secretion in insulin producing INS-1E cells.</title>
        <authorList>
            <person name="Billert M."/>
            <person name="Kolodziejski P.A."/>
            <person name="Strowski M.Z."/>
            <person name="Nowak K.W."/>
            <person name="Skrzypski M."/>
        </authorList>
    </citation>
    <scope>FUNCTION</scope>
    <scope>SUBCELLULAR LOCATION</scope>
    <scope>TISSUE SPECIFICITY</scope>
</reference>
<reference evidence="15" key="9">
    <citation type="journal article" date="2019" name="Brain Res.">
        <title>Intracerebroventricular injection of phoenixin alters feeding behavior and activates nesfatin-1 immunoreactive neurons in rats.</title>
        <authorList>
            <person name="Friedrich T."/>
            <person name="Schalla M.A."/>
            <person name="Scharner S."/>
            <person name="Kuehne S.G."/>
            <person name="Goebel-Stengel M."/>
            <person name="Kobelt P."/>
            <person name="Rose M."/>
            <person name="Stengel A."/>
        </authorList>
    </citation>
    <scope>FUNCTION</scope>
</reference>
<reference evidence="15" key="10">
    <citation type="journal article" date="2019" name="Clin. Exp. Pharmacol. Physiol.">
        <title>The GnRH analogues affect novel neuropeptide SMIM20/phoenixin and GPR173 receptor expressions in the female rat hypothalamic-pituitary-gonadal (HPG) axis.</title>
        <authorList>
            <person name="Suszka-Switek A."/>
            <person name="Palasz A."/>
            <person name="Filipczyk L."/>
            <person name="Menezes I.C."/>
            <person name="Mordecka-Chamera K."/>
            <person name="Angelone T."/>
            <person name="Bogus K."/>
            <person name="Bacopoulou F."/>
            <person name="Worthington J.J."/>
            <person name="Wiaderkiewicz R."/>
        </authorList>
    </citation>
    <scope>FUNCTION</scope>
    <scope>SUBCELLULAR LOCATION</scope>
</reference>
<name>SIM20_RAT</name>
<proteinExistence type="evidence at protein level"/>
<dbReference type="RefSeq" id="NP_001128111.2">
    <property type="nucleotide sequence ID" value="NM_001134639.2"/>
</dbReference>
<dbReference type="SMR" id="C0HLM6"/>
<dbReference type="FunCoup" id="C0HLM6">
    <property type="interactions" value="396"/>
</dbReference>
<dbReference type="PhosphoSitePlus" id="C0HLM6"/>
<dbReference type="GeneID" id="501923"/>
<dbReference type="KEGG" id="rno:501923"/>
<dbReference type="AGR" id="RGD:1565192"/>
<dbReference type="CTD" id="389203"/>
<dbReference type="RGD" id="1565192">
    <property type="gene designation" value="Smim20"/>
</dbReference>
<dbReference type="InParanoid" id="C0HLM6"/>
<dbReference type="OrthoDB" id="6729at9989"/>
<dbReference type="Reactome" id="R-RNO-9864848">
    <property type="pathway name" value="Complex IV assembly"/>
</dbReference>
<dbReference type="PRO" id="PR:C0HLM6"/>
<dbReference type="Proteomes" id="UP000002494">
    <property type="component" value="Unplaced"/>
</dbReference>
<dbReference type="GO" id="GO:0005576">
    <property type="term" value="C:extracellular region"/>
    <property type="evidence" value="ECO:0007669"/>
    <property type="project" value="UniProtKB-SubCell"/>
</dbReference>
<dbReference type="GO" id="GO:0005743">
    <property type="term" value="C:mitochondrial inner membrane"/>
    <property type="evidence" value="ECO:0000266"/>
    <property type="project" value="RGD"/>
</dbReference>
<dbReference type="GO" id="GO:0033617">
    <property type="term" value="P:mitochondrial cytochrome c oxidase assembly"/>
    <property type="evidence" value="ECO:0000266"/>
    <property type="project" value="RGD"/>
</dbReference>
<dbReference type="InterPro" id="IPR027917">
    <property type="entry name" value="SMIM20"/>
</dbReference>
<dbReference type="PANTHER" id="PTHR34923">
    <property type="entry name" value="SMALL INTEGRAL MEMBRANE PROTEIN 20"/>
    <property type="match status" value="1"/>
</dbReference>
<dbReference type="PANTHER" id="PTHR34923:SF1">
    <property type="entry name" value="SMALL INTEGRAL MEMBRANE PROTEIN 20"/>
    <property type="match status" value="1"/>
</dbReference>
<dbReference type="Pfam" id="PF15061">
    <property type="entry name" value="DUF4538"/>
    <property type="match status" value="1"/>
</dbReference>
<feature type="chain" id="PRO_0000449033" description="Small integral membrane protein 20" evidence="3">
    <location>
        <begin position="1"/>
        <end position="69"/>
    </location>
</feature>
<feature type="peptide" id="PRO_0000449034" description="Phoenixin-20" evidence="4">
    <location>
        <begin position="47"/>
        <end position="66"/>
    </location>
</feature>
<feature type="peptide" id="PRO_0000449035" description="Phoenixin-14">
    <location>
        <begin position="53"/>
        <end position="66"/>
    </location>
</feature>
<feature type="topological domain" description="Mitochondrial matrix" evidence="15">
    <location>
        <begin position="1"/>
        <end position="8"/>
    </location>
</feature>
<feature type="transmembrane region" description="Helical" evidence="3">
    <location>
        <begin position="9"/>
        <end position="29"/>
    </location>
</feature>
<feature type="topological domain" description="Mitochondrial intermembrane" evidence="15">
    <location>
        <begin position="30"/>
        <end position="69"/>
    </location>
</feature>
<feature type="modified residue" description="Phenylalanine amide" evidence="4">
    <location>
        <position position="66"/>
    </location>
</feature>
<keyword id="KW-0027">Amidation</keyword>
<keyword id="KW-0903">Direct protein sequencing</keyword>
<keyword id="KW-0472">Membrane</keyword>
<keyword id="KW-0496">Mitochondrion</keyword>
<keyword id="KW-0999">Mitochondrion inner membrane</keyword>
<keyword id="KW-1185">Reference proteome</keyword>
<keyword id="KW-0964">Secreted</keyword>
<keyword id="KW-0809">Transit peptide</keyword>
<keyword id="KW-0812">Transmembrane</keyword>
<keyword id="KW-1133">Transmembrane helix</keyword>
<gene>
    <name evidence="16" type="primary">Smim20</name>
</gene>
<sequence length="69" mass="7800">MAAARNLRTALIFGGFISMVGAAFYPIYFRPLLRLEEYQKEQAVNRAGIVQEDVQPPGLKVWSDPFGRK</sequence>